<comment type="function">
    <text evidence="2">Component of the ubiquinol-cytochrome c reductase complex (complex III or cytochrome b-c1 complex) that is part of the mitochondrial respiratory chain. The b-c1 complex mediates electron transfer from ubiquinol to cytochrome c. Contributes to the generation of a proton gradient across the mitochondrial membrane that is then used for ATP synthesis.</text>
</comment>
<comment type="cofactor">
    <cofactor evidence="2">
        <name>heme b</name>
        <dbReference type="ChEBI" id="CHEBI:60344"/>
    </cofactor>
    <text evidence="2">Binds 2 heme b groups non-covalently.</text>
</comment>
<comment type="subunit">
    <text evidence="2">The cytochrome bc1 complex contains 11 subunits: 3 respiratory subunits (MT-CYB, CYC1 and UQCRFS1), 2 core proteins (UQCRC1 and UQCRC2) and 6 low-molecular weight proteins (UQCRH/QCR6, UQCRB/QCR7, UQCRQ/QCR8, UQCR10/QCR9, UQCR11/QCR10 and a cleavage product of UQCRFS1). This cytochrome bc1 complex then forms a dimer.</text>
</comment>
<comment type="subcellular location">
    <subcellularLocation>
        <location evidence="2">Mitochondrion inner membrane</location>
        <topology evidence="2">Multi-pass membrane protein</topology>
    </subcellularLocation>
</comment>
<comment type="miscellaneous">
    <text evidence="1">Heme 1 (or BL or b562) is low-potential and absorbs at about 562 nm, and heme 2 (or BH or b566) is high-potential and absorbs at about 566 nm.</text>
</comment>
<comment type="similarity">
    <text evidence="3 4">Belongs to the cytochrome b family.</text>
</comment>
<comment type="caution">
    <text evidence="5">An expected heme iron ligand His residue was not found at position 51 in this sequence.</text>
</comment>
<comment type="caution">
    <text evidence="2">The full-length protein contains only eight transmembrane helices, not nine as predicted by bioinformatics tools.</text>
</comment>
<name>CYB_COLRU</name>
<evidence type="ECO:0000250" key="1"/>
<evidence type="ECO:0000250" key="2">
    <source>
        <dbReference type="UniProtKB" id="P00157"/>
    </source>
</evidence>
<evidence type="ECO:0000255" key="3">
    <source>
        <dbReference type="PROSITE-ProRule" id="PRU00967"/>
    </source>
</evidence>
<evidence type="ECO:0000255" key="4">
    <source>
        <dbReference type="PROSITE-ProRule" id="PRU00968"/>
    </source>
</evidence>
<evidence type="ECO:0000305" key="5"/>
<organism>
    <name type="scientific">Colaptes rupicola</name>
    <name type="common">Southern Andean flicker</name>
    <dbReference type="NCBI Taxonomy" id="9222"/>
    <lineage>
        <taxon>Eukaryota</taxon>
        <taxon>Metazoa</taxon>
        <taxon>Chordata</taxon>
        <taxon>Craniata</taxon>
        <taxon>Vertebrata</taxon>
        <taxon>Euteleostomi</taxon>
        <taxon>Archelosauria</taxon>
        <taxon>Archosauria</taxon>
        <taxon>Dinosauria</taxon>
        <taxon>Saurischia</taxon>
        <taxon>Theropoda</taxon>
        <taxon>Coelurosauria</taxon>
        <taxon>Aves</taxon>
        <taxon>Neognathae</taxon>
        <taxon>Neoaves</taxon>
        <taxon>Telluraves</taxon>
        <taxon>Coraciimorphae</taxon>
        <taxon>Piciformes</taxon>
        <taxon>Picidae</taxon>
        <taxon>Colaptes</taxon>
    </lineage>
</organism>
<geneLocation type="mitochondrion"/>
<sequence>FGSLLGICLLTQIITGLLLATHYTADTTLAFSSVAHTCRNVQYGWLIRNLQANGASFFFICIYLHIGRGFYYGSYLFKETWNTGVILLLTLMATAFVGYVLPWRQMSFWGATVITNLFSALPYIGQTIVEWAWGGFSVDNPTLTRFFALHFLLPFLIAGLTLIHFTFLHESGSNNPLGIMSDCDKIPFHPYFSVKDILGFMFMLLPLTTLALFSPNLLGDPENFTPANPLVTPPHIKPEWYFLFAYAILRSIPNKLGGVLALAASVLVLFLAPFLHTSKQRTMAFRPLSQFLFWMLVANLLILTWVGS</sequence>
<keyword id="KW-0249">Electron transport</keyword>
<keyword id="KW-0349">Heme</keyword>
<keyword id="KW-0408">Iron</keyword>
<keyword id="KW-0472">Membrane</keyword>
<keyword id="KW-0479">Metal-binding</keyword>
<keyword id="KW-0496">Mitochondrion</keyword>
<keyword id="KW-0999">Mitochondrion inner membrane</keyword>
<keyword id="KW-0679">Respiratory chain</keyword>
<keyword id="KW-0812">Transmembrane</keyword>
<keyword id="KW-1133">Transmembrane helix</keyword>
<keyword id="KW-0813">Transport</keyword>
<keyword id="KW-0830">Ubiquinone</keyword>
<accession>P29635</accession>
<proteinExistence type="inferred from homology"/>
<feature type="chain" id="PRO_0000060801" description="Cytochrome b">
    <location>
        <begin position="1" status="less than"/>
        <end position="308" status="greater than"/>
    </location>
</feature>
<feature type="transmembrane region" description="Helical" evidence="2">
    <location>
        <begin position="1"/>
        <end position="21"/>
    </location>
</feature>
<feature type="transmembrane region" description="Helical" evidence="2">
    <location>
        <begin position="45"/>
        <end position="66"/>
    </location>
</feature>
<feature type="transmembrane region" description="Helical" evidence="2">
    <location>
        <begin position="81"/>
        <end position="101"/>
    </location>
</feature>
<feature type="transmembrane region" description="Helical" evidence="2">
    <location>
        <begin position="146"/>
        <end position="166"/>
    </location>
</feature>
<feature type="transmembrane region" description="Helical" evidence="2">
    <location>
        <begin position="194"/>
        <end position="214"/>
    </location>
</feature>
<feature type="transmembrane region" description="Helical" evidence="2">
    <location>
        <begin position="256"/>
        <end position="276"/>
    </location>
</feature>
<feature type="transmembrane region" description="Helical" evidence="2">
    <location>
        <begin position="288"/>
        <end position="308"/>
    </location>
</feature>
<feature type="binding site" description="axial binding residue" evidence="2">
    <location>
        <position position="65"/>
    </location>
    <ligand>
        <name>heme b</name>
        <dbReference type="ChEBI" id="CHEBI:60344"/>
        <label>b566</label>
    </ligand>
    <ligandPart>
        <name>Fe</name>
        <dbReference type="ChEBI" id="CHEBI:18248"/>
    </ligandPart>
</feature>
<feature type="binding site" description="axial binding residue" evidence="2">
    <location>
        <position position="150"/>
    </location>
    <ligand>
        <name>heme b</name>
        <dbReference type="ChEBI" id="CHEBI:60344"/>
        <label>b562</label>
    </ligand>
    <ligandPart>
        <name>Fe</name>
        <dbReference type="ChEBI" id="CHEBI:18248"/>
    </ligandPart>
</feature>
<feature type="binding site" description="axial binding residue" evidence="2">
    <location>
        <position position="164"/>
    </location>
    <ligand>
        <name>heme b</name>
        <dbReference type="ChEBI" id="CHEBI:60344"/>
        <label>b566</label>
    </ligand>
    <ligandPart>
        <name>Fe</name>
        <dbReference type="ChEBI" id="CHEBI:18248"/>
    </ligandPart>
</feature>
<feature type="binding site" evidence="2">
    <location>
        <position position="169"/>
    </location>
    <ligand>
        <name>a ubiquinone</name>
        <dbReference type="ChEBI" id="CHEBI:16389"/>
    </ligand>
</feature>
<feature type="non-terminal residue">
    <location>
        <position position="1"/>
    </location>
</feature>
<feature type="non-terminal residue">
    <location>
        <position position="308"/>
    </location>
</feature>
<protein>
    <recommendedName>
        <fullName>Cytochrome b</fullName>
    </recommendedName>
    <alternativeName>
        <fullName>Complex III subunit 3</fullName>
    </alternativeName>
    <alternativeName>
        <fullName>Complex III subunit III</fullName>
    </alternativeName>
    <alternativeName>
        <fullName>Cytochrome b-c1 complex subunit 3</fullName>
    </alternativeName>
    <alternativeName>
        <fullName>Ubiquinol-cytochrome-c reductase complex cytochrome b subunit</fullName>
    </alternativeName>
</protein>
<gene>
    <name type="primary">MT-CYB</name>
    <name type="synonym">COB</name>
    <name type="synonym">CYTB</name>
    <name type="synonym">MTCYB</name>
</gene>
<dbReference type="EMBL" id="X60949">
    <property type="protein sequence ID" value="CAA43284.1"/>
    <property type="molecule type" value="Genomic_DNA"/>
</dbReference>
<dbReference type="PIR" id="S22923">
    <property type="entry name" value="S22923"/>
</dbReference>
<dbReference type="SMR" id="P29635"/>
<dbReference type="GO" id="GO:0005743">
    <property type="term" value="C:mitochondrial inner membrane"/>
    <property type="evidence" value="ECO:0007669"/>
    <property type="project" value="UniProtKB-SubCell"/>
</dbReference>
<dbReference type="GO" id="GO:0046872">
    <property type="term" value="F:metal ion binding"/>
    <property type="evidence" value="ECO:0007669"/>
    <property type="project" value="UniProtKB-KW"/>
</dbReference>
<dbReference type="GO" id="GO:0008121">
    <property type="term" value="F:ubiquinol-cytochrome-c reductase activity"/>
    <property type="evidence" value="ECO:0007669"/>
    <property type="project" value="TreeGrafter"/>
</dbReference>
<dbReference type="GO" id="GO:0006122">
    <property type="term" value="P:mitochondrial electron transport, ubiquinol to cytochrome c"/>
    <property type="evidence" value="ECO:0007669"/>
    <property type="project" value="TreeGrafter"/>
</dbReference>
<dbReference type="CDD" id="cd00290">
    <property type="entry name" value="cytochrome_b_C"/>
    <property type="match status" value="1"/>
</dbReference>
<dbReference type="CDD" id="cd00284">
    <property type="entry name" value="Cytochrome_b_N"/>
    <property type="match status" value="1"/>
</dbReference>
<dbReference type="Gene3D" id="1.20.810.10">
    <property type="entry name" value="Cytochrome Bc1 Complex, Chain C"/>
    <property type="match status" value="1"/>
</dbReference>
<dbReference type="InterPro" id="IPR005798">
    <property type="entry name" value="Cyt_b/b6_C"/>
</dbReference>
<dbReference type="InterPro" id="IPR036150">
    <property type="entry name" value="Cyt_b/b6_C_sf"/>
</dbReference>
<dbReference type="InterPro" id="IPR005797">
    <property type="entry name" value="Cyt_b/b6_N"/>
</dbReference>
<dbReference type="InterPro" id="IPR027387">
    <property type="entry name" value="Cytb/b6-like_sf"/>
</dbReference>
<dbReference type="InterPro" id="IPR048260">
    <property type="entry name" value="Cytochrome_b_C_euk/bac"/>
</dbReference>
<dbReference type="InterPro" id="IPR048259">
    <property type="entry name" value="Cytochrome_b_N_euk/bac"/>
</dbReference>
<dbReference type="InterPro" id="IPR016174">
    <property type="entry name" value="Di-haem_cyt_TM"/>
</dbReference>
<dbReference type="PANTHER" id="PTHR19271">
    <property type="entry name" value="CYTOCHROME B"/>
    <property type="match status" value="1"/>
</dbReference>
<dbReference type="PANTHER" id="PTHR19271:SF16">
    <property type="entry name" value="CYTOCHROME B"/>
    <property type="match status" value="1"/>
</dbReference>
<dbReference type="Pfam" id="PF00032">
    <property type="entry name" value="Cytochrom_B_C"/>
    <property type="match status" value="1"/>
</dbReference>
<dbReference type="Pfam" id="PF00033">
    <property type="entry name" value="Cytochrome_B"/>
    <property type="match status" value="1"/>
</dbReference>
<dbReference type="SUPFAM" id="SSF81648">
    <property type="entry name" value="a domain/subunit of cytochrome bc1 complex (Ubiquinol-cytochrome c reductase)"/>
    <property type="match status" value="1"/>
</dbReference>
<dbReference type="SUPFAM" id="SSF81342">
    <property type="entry name" value="Transmembrane di-heme cytochromes"/>
    <property type="match status" value="1"/>
</dbReference>
<dbReference type="PROSITE" id="PS51003">
    <property type="entry name" value="CYTB_CTER"/>
    <property type="match status" value="1"/>
</dbReference>
<dbReference type="PROSITE" id="PS51002">
    <property type="entry name" value="CYTB_NTER"/>
    <property type="match status" value="1"/>
</dbReference>
<reference key="1">
    <citation type="journal article" date="1991" name="Proc. R. Soc. B">
        <title>Mitochondrial resolution of a deep branch in the genealogical tree for perching birds.</title>
        <authorList>
            <person name="Edwards S.V."/>
            <person name="Arctander P."/>
            <person name="Wilson A.C."/>
        </authorList>
    </citation>
    <scope>NUCLEOTIDE SEQUENCE [GENOMIC DNA]</scope>
</reference>
<reference key="2">
    <citation type="journal article" date="1996" name="Proc. R. Soc. B">
        <authorList>
            <person name="Edwards S.V."/>
            <person name="Arctander P."/>
        </authorList>
    </citation>
    <scope>ERRATUM OF PUBMED:1676522</scope>
</reference>